<keyword id="KW-0963">Cytoplasm</keyword>
<keyword id="KW-0342">GTP-binding</keyword>
<keyword id="KW-0378">Hydrolase</keyword>
<keyword id="KW-0449">Lipoprotein</keyword>
<keyword id="KW-0472">Membrane</keyword>
<keyword id="KW-0488">Methylation</keyword>
<keyword id="KW-0547">Nucleotide-binding</keyword>
<keyword id="KW-0636">Prenylation</keyword>
<keyword id="KW-1185">Reference proteome</keyword>
<accession>P92978</accession>
<evidence type="ECO:0000250" key="1"/>
<evidence type="ECO:0000255" key="2"/>
<evidence type="ECO:0000269" key="3">
    <source>
    </source>
</evidence>
<evidence type="ECO:0000269" key="4">
    <source>
    </source>
</evidence>
<evidence type="ECO:0000269" key="5">
    <source>
    </source>
</evidence>
<evidence type="ECO:0000269" key="6">
    <source>
    </source>
</evidence>
<evidence type="ECO:0000269" key="7">
    <source>
    </source>
</evidence>
<evidence type="ECO:0000269" key="8">
    <source>
    </source>
</evidence>
<evidence type="ECO:0000303" key="9">
    <source>
    </source>
</evidence>
<evidence type="ECO:0000303" key="10">
    <source>
    </source>
</evidence>
<evidence type="ECO:0000305" key="11"/>
<evidence type="ECO:0000312" key="12">
    <source>
        <dbReference type="Araport" id="AT3G51300"/>
    </source>
</evidence>
<evidence type="ECO:0000312" key="13">
    <source>
        <dbReference type="EMBL" id="CAB62652.1"/>
    </source>
</evidence>
<reference key="1">
    <citation type="journal article" date="1998" name="Plant Physiol.">
        <title>Arabidopsis Rho-related GTPases: differential gene expression in pollen and polar localization in fission yeast.</title>
        <authorList>
            <person name="Li H."/>
            <person name="Wu G."/>
            <person name="Ware D."/>
            <person name="Davis K.R."/>
            <person name="Yang Z."/>
        </authorList>
    </citation>
    <scope>NUCLEOTIDE SEQUENCE [GENOMIC DNA]</scope>
    <scope>FUNCTION</scope>
    <scope>TISSUE SPECIFICITY</scope>
    <source>
        <strain>cv. Columbia</strain>
    </source>
</reference>
<reference key="2">
    <citation type="journal article" date="2000" name="Genetics">
        <title>Genetic structure and evolution of RAC-GTPases in Arabidopsis thaliana.</title>
        <authorList>
            <person name="Winge P."/>
            <person name="Brembu T."/>
            <person name="Kristensen R."/>
            <person name="Bones A.M."/>
        </authorList>
    </citation>
    <scope>NUCLEOTIDE SEQUENCE [GENOMIC DNA]</scope>
    <source>
        <strain>cv. Landsberg erecta</strain>
    </source>
</reference>
<reference key="3">
    <citation type="journal article" date="2000" name="Nature">
        <title>Sequence and analysis of chromosome 3 of the plant Arabidopsis thaliana.</title>
        <authorList>
            <person name="Salanoubat M."/>
            <person name="Lemcke K."/>
            <person name="Rieger M."/>
            <person name="Ansorge W."/>
            <person name="Unseld M."/>
            <person name="Fartmann B."/>
            <person name="Valle G."/>
            <person name="Bloecker H."/>
            <person name="Perez-Alonso M."/>
            <person name="Obermaier B."/>
            <person name="Delseny M."/>
            <person name="Boutry M."/>
            <person name="Grivell L.A."/>
            <person name="Mache R."/>
            <person name="Puigdomenech P."/>
            <person name="De Simone V."/>
            <person name="Choisne N."/>
            <person name="Artiguenave F."/>
            <person name="Robert C."/>
            <person name="Brottier P."/>
            <person name="Wincker P."/>
            <person name="Cattolico L."/>
            <person name="Weissenbach J."/>
            <person name="Saurin W."/>
            <person name="Quetier F."/>
            <person name="Schaefer M."/>
            <person name="Mueller-Auer S."/>
            <person name="Gabel C."/>
            <person name="Fuchs M."/>
            <person name="Benes V."/>
            <person name="Wurmbach E."/>
            <person name="Drzonek H."/>
            <person name="Erfle H."/>
            <person name="Jordan N."/>
            <person name="Bangert S."/>
            <person name="Wiedelmann R."/>
            <person name="Kranz H."/>
            <person name="Voss H."/>
            <person name="Holland R."/>
            <person name="Brandt P."/>
            <person name="Nyakatura G."/>
            <person name="Vezzi A."/>
            <person name="D'Angelo M."/>
            <person name="Pallavicini A."/>
            <person name="Toppo S."/>
            <person name="Simionati B."/>
            <person name="Conrad A."/>
            <person name="Hornischer K."/>
            <person name="Kauer G."/>
            <person name="Loehnert T.-H."/>
            <person name="Nordsiek G."/>
            <person name="Reichelt J."/>
            <person name="Scharfe M."/>
            <person name="Schoen O."/>
            <person name="Bargues M."/>
            <person name="Terol J."/>
            <person name="Climent J."/>
            <person name="Navarro P."/>
            <person name="Collado C."/>
            <person name="Perez-Perez A."/>
            <person name="Ottenwaelder B."/>
            <person name="Duchemin D."/>
            <person name="Cooke R."/>
            <person name="Laudie M."/>
            <person name="Berger-Llauro C."/>
            <person name="Purnelle B."/>
            <person name="Masuy D."/>
            <person name="de Haan M."/>
            <person name="Maarse A.C."/>
            <person name="Alcaraz J.-P."/>
            <person name="Cottet A."/>
            <person name="Casacuberta E."/>
            <person name="Monfort A."/>
            <person name="Argiriou A."/>
            <person name="Flores M."/>
            <person name="Liguori R."/>
            <person name="Vitale D."/>
            <person name="Mannhaupt G."/>
            <person name="Haase D."/>
            <person name="Schoof H."/>
            <person name="Rudd S."/>
            <person name="Zaccaria P."/>
            <person name="Mewes H.-W."/>
            <person name="Mayer K.F.X."/>
            <person name="Kaul S."/>
            <person name="Town C.D."/>
            <person name="Koo H.L."/>
            <person name="Tallon L.J."/>
            <person name="Jenkins J."/>
            <person name="Rooney T."/>
            <person name="Rizzo M."/>
            <person name="Walts A."/>
            <person name="Utterback T."/>
            <person name="Fujii C.Y."/>
            <person name="Shea T.P."/>
            <person name="Creasy T.H."/>
            <person name="Haas B."/>
            <person name="Maiti R."/>
            <person name="Wu D."/>
            <person name="Peterson J."/>
            <person name="Van Aken S."/>
            <person name="Pai G."/>
            <person name="Militscher J."/>
            <person name="Sellers P."/>
            <person name="Gill J.E."/>
            <person name="Feldblyum T.V."/>
            <person name="Preuss D."/>
            <person name="Lin X."/>
            <person name="Nierman W.C."/>
            <person name="Salzberg S.L."/>
            <person name="White O."/>
            <person name="Venter J.C."/>
            <person name="Fraser C.M."/>
            <person name="Kaneko T."/>
            <person name="Nakamura Y."/>
            <person name="Sato S."/>
            <person name="Kato T."/>
            <person name="Asamizu E."/>
            <person name="Sasamoto S."/>
            <person name="Kimura T."/>
            <person name="Idesawa K."/>
            <person name="Kawashima K."/>
            <person name="Kishida Y."/>
            <person name="Kiyokawa C."/>
            <person name="Kohara M."/>
            <person name="Matsumoto M."/>
            <person name="Matsuno A."/>
            <person name="Muraki A."/>
            <person name="Nakayama S."/>
            <person name="Nakazaki N."/>
            <person name="Shinpo S."/>
            <person name="Takeuchi C."/>
            <person name="Wada T."/>
            <person name="Watanabe A."/>
            <person name="Yamada M."/>
            <person name="Yasuda M."/>
            <person name="Tabata S."/>
        </authorList>
    </citation>
    <scope>NUCLEOTIDE SEQUENCE [LARGE SCALE GENOMIC DNA]</scope>
    <source>
        <strain>cv. Columbia</strain>
    </source>
</reference>
<reference key="4">
    <citation type="journal article" date="2017" name="Plant J.">
        <title>Araport11: a complete reannotation of the Arabidopsis thaliana reference genome.</title>
        <authorList>
            <person name="Cheng C.Y."/>
            <person name="Krishnakumar V."/>
            <person name="Chan A.P."/>
            <person name="Thibaud-Nissen F."/>
            <person name="Schobel S."/>
            <person name="Town C.D."/>
        </authorList>
    </citation>
    <scope>GENOME REANNOTATION</scope>
    <source>
        <strain>cv. Columbia</strain>
    </source>
</reference>
<reference key="5">
    <citation type="journal article" date="2003" name="Science">
        <title>Empirical analysis of transcriptional activity in the Arabidopsis genome.</title>
        <authorList>
            <person name="Yamada K."/>
            <person name="Lim J."/>
            <person name="Dale J.M."/>
            <person name="Chen H."/>
            <person name="Shinn P."/>
            <person name="Palm C.J."/>
            <person name="Southwick A.M."/>
            <person name="Wu H.C."/>
            <person name="Kim C.J."/>
            <person name="Nguyen M."/>
            <person name="Pham P.K."/>
            <person name="Cheuk R.F."/>
            <person name="Karlin-Newmann G."/>
            <person name="Liu S.X."/>
            <person name="Lam B."/>
            <person name="Sakano H."/>
            <person name="Wu T."/>
            <person name="Yu G."/>
            <person name="Miranda M."/>
            <person name="Quach H.L."/>
            <person name="Tripp M."/>
            <person name="Chang C.H."/>
            <person name="Lee J.M."/>
            <person name="Toriumi M.J."/>
            <person name="Chan M.M."/>
            <person name="Tang C.C."/>
            <person name="Onodera C.S."/>
            <person name="Deng J.M."/>
            <person name="Akiyama K."/>
            <person name="Ansari Y."/>
            <person name="Arakawa T."/>
            <person name="Banh J."/>
            <person name="Banno F."/>
            <person name="Bowser L."/>
            <person name="Brooks S.Y."/>
            <person name="Carninci P."/>
            <person name="Chao Q."/>
            <person name="Choy N."/>
            <person name="Enju A."/>
            <person name="Goldsmith A.D."/>
            <person name="Gurjal M."/>
            <person name="Hansen N.F."/>
            <person name="Hayashizaki Y."/>
            <person name="Johnson-Hopson C."/>
            <person name="Hsuan V.W."/>
            <person name="Iida K."/>
            <person name="Karnes M."/>
            <person name="Khan S."/>
            <person name="Koesema E."/>
            <person name="Ishida J."/>
            <person name="Jiang P.X."/>
            <person name="Jones T."/>
            <person name="Kawai J."/>
            <person name="Kamiya A."/>
            <person name="Meyers C."/>
            <person name="Nakajima M."/>
            <person name="Narusaka M."/>
            <person name="Seki M."/>
            <person name="Sakurai T."/>
            <person name="Satou M."/>
            <person name="Tamse R."/>
            <person name="Vaysberg M."/>
            <person name="Wallender E.K."/>
            <person name="Wong C."/>
            <person name="Yamamura Y."/>
            <person name="Yuan S."/>
            <person name="Shinozaki K."/>
            <person name="Davis R.W."/>
            <person name="Theologis A."/>
            <person name="Ecker J.R."/>
        </authorList>
    </citation>
    <scope>NUCLEOTIDE SEQUENCE [LARGE SCALE MRNA]</scope>
    <source>
        <strain>cv. Columbia</strain>
    </source>
</reference>
<reference key="6">
    <citation type="journal article" date="2001" name="Plant Cell">
        <title>A novel UDP-glucose transferase is part of the callose synthase complex and interacts with phragmoplastin at the forming cell plate.</title>
        <authorList>
            <person name="Hong Z."/>
            <person name="Zhang Z."/>
            <person name="Olson J.M."/>
            <person name="Verma D.P.S."/>
        </authorList>
    </citation>
    <scope>INTERACTION WITH UGT1</scope>
</reference>
<reference key="7">
    <citation type="journal article" date="2008" name="Mol. Plant">
        <title>RIP1 (ROP Interactive Partner 1)/ICR1 marks pollen germination sites and may act in the ROP1 pathway in the control of polarized pollen growth.</title>
        <authorList>
            <person name="Li S."/>
            <person name="Gu Y."/>
            <person name="Yan A."/>
            <person name="Lord E."/>
            <person name="Yang Z.B."/>
        </authorList>
    </citation>
    <scope>INTERACTION WITH ICR1; ICR2; ICR3; ICR4 AND ICR5</scope>
</reference>
<reference key="8">
    <citation type="journal article" date="2008" name="Plant Physiol.">
        <title>A novel RNA-binding protein associated with cell plate formation.</title>
        <authorList>
            <person name="Ma L."/>
            <person name="Xie B."/>
            <person name="Hong Z."/>
            <person name="Verma D.P.S."/>
            <person name="Zhang Z."/>
        </authorList>
    </citation>
    <scope>INTERACTION WITH PHIP1</scope>
</reference>
<reference key="9">
    <citation type="journal article" date="2010" name="Eur. J. Cell Biol.">
        <title>RIP3 and AtKinesin-13A - a novel interaction linking Rho proteins of plants to microtubules.</title>
        <authorList>
            <person name="Mucha E."/>
            <person name="Hoefle C."/>
            <person name="Huckelhoven R."/>
            <person name="Berken A."/>
        </authorList>
    </citation>
    <scope>INTERACTION WITH ICR1 AND ICR5</scope>
</reference>
<reference key="10">
    <citation type="journal article" date="2013" name="Mol. Plant">
        <title>AtPRK2 Promotes ROP1 activation via RopGEFs in the control of polarized pollen tube growth.</title>
        <authorList>
            <person name="Chang F."/>
            <person name="Gu Y."/>
            <person name="Ma H."/>
            <person name="Yang Z."/>
        </authorList>
    </citation>
    <scope>INTERACTION WITH ROPGEF1 AND PRK2</scope>
</reference>
<sequence>MSASRFVKCVTVGDGAVGKTCLLISYTSNTFPTDYVPTVFDNFSANVVVNGSTVNLGLWDTAGQEDYNRLRPLSYRGADVFILAFSLISKASYENVSKKWIPELKHYAPGVPIVLVGTKLDLRDDKQFFIDHPGAVPITTAQGEELRKQIGAPTYIECSSKTQENVKAVFDAAIRVVLQPPKQKKKKSKAQKACSIL</sequence>
<comment type="function">
    <text evidence="8">May be involved in cell polarity control during the actin-dependent tip growth of pollen tubes. May regulate callose synthase 1 (CALS1) activity through the interaction with UGT1.</text>
</comment>
<comment type="function">
    <text evidence="1">Inactive GDP-bound Rho GTPases reside in the cytosol, are found in a complex with Rho GDP-dissociation inhibitors (Rho GDIs), and are released from the GDI protein in order to translocate to membranes upon activation.</text>
</comment>
<comment type="catalytic activity">
    <reaction evidence="11">
        <text>GTP + H2O = GDP + phosphate + H(+)</text>
        <dbReference type="Rhea" id="RHEA:19669"/>
        <dbReference type="ChEBI" id="CHEBI:15377"/>
        <dbReference type="ChEBI" id="CHEBI:15378"/>
        <dbReference type="ChEBI" id="CHEBI:37565"/>
        <dbReference type="ChEBI" id="CHEBI:43474"/>
        <dbReference type="ChEBI" id="CHEBI:58189"/>
    </reaction>
</comment>
<comment type="subunit">
    <text evidence="3 4 5 6 7">Part of a complex containing ROPGEF1 and PRK2 (PubMed:23024212). Interacts with UGT1, ICR1, ICR2, ICR3, ICR4 and ICR5. Interacts with PHIP1 when activated by GTP (PubMed:18621982).</text>
</comment>
<comment type="subcellular location">
    <subcellularLocation>
        <location evidence="1">Cytoplasm</location>
    </subcellularLocation>
    <subcellularLocation>
        <location evidence="1">Membrane</location>
        <topology evidence="1">Peripheral membrane protein</topology>
    </subcellularLocation>
    <text>Associated with the membrane when activated.</text>
</comment>
<comment type="tissue specificity">
    <text evidence="8">Exclusively expressed in mature pollen and pollen tubes.</text>
</comment>
<comment type="similarity">
    <text evidence="11">Belongs to the small GTPase superfamily. Rho family.</text>
</comment>
<protein>
    <recommendedName>
        <fullName evidence="9">Rac-like GTP-binding protein ARAC11</fullName>
        <ecNumber evidence="11">3.6.5.-</ecNumber>
    </recommendedName>
    <alternativeName>
        <fullName evidence="10">GTPase protein ROP1</fullName>
    </alternativeName>
</protein>
<dbReference type="EC" id="3.6.5.-" evidence="11"/>
<dbReference type="EMBL" id="U49971">
    <property type="protein sequence ID" value="AAC78390.1"/>
    <property type="molecule type" value="Genomic_DNA"/>
</dbReference>
<dbReference type="EMBL" id="AF085480">
    <property type="protein sequence ID" value="AAC35850.1"/>
    <property type="molecule type" value="Genomic_DNA"/>
</dbReference>
<dbReference type="EMBL" id="AL132980">
    <property type="protein sequence ID" value="CAB62652.1"/>
    <property type="molecule type" value="Genomic_DNA"/>
</dbReference>
<dbReference type="EMBL" id="CP002686">
    <property type="protein sequence ID" value="AEE78776.1"/>
    <property type="molecule type" value="Genomic_DNA"/>
</dbReference>
<dbReference type="EMBL" id="AF375412">
    <property type="protein sequence ID" value="AAK52996.1"/>
    <property type="molecule type" value="mRNA"/>
</dbReference>
<dbReference type="EMBL" id="AY066054">
    <property type="protein sequence ID" value="AAL47421.1"/>
    <property type="molecule type" value="mRNA"/>
</dbReference>
<dbReference type="PIR" id="T45761">
    <property type="entry name" value="T45761"/>
</dbReference>
<dbReference type="RefSeq" id="NP_190698.1">
    <property type="nucleotide sequence ID" value="NM_114989.4"/>
</dbReference>
<dbReference type="SMR" id="P92978"/>
<dbReference type="BioGRID" id="9611">
    <property type="interactions" value="22"/>
</dbReference>
<dbReference type="FunCoup" id="P92978">
    <property type="interactions" value="2648"/>
</dbReference>
<dbReference type="IntAct" id="P92978">
    <property type="interactions" value="3"/>
</dbReference>
<dbReference type="STRING" id="3702.P92978"/>
<dbReference type="iPTMnet" id="P92978"/>
<dbReference type="PaxDb" id="3702-AT3G51300.1"/>
<dbReference type="ProteomicsDB" id="234822"/>
<dbReference type="EnsemblPlants" id="AT3G51300.1">
    <property type="protein sequence ID" value="AT3G51300.1"/>
    <property type="gene ID" value="AT3G51300"/>
</dbReference>
<dbReference type="GeneID" id="824293"/>
<dbReference type="Gramene" id="AT3G51300.1">
    <property type="protein sequence ID" value="AT3G51300.1"/>
    <property type="gene ID" value="AT3G51300"/>
</dbReference>
<dbReference type="KEGG" id="ath:AT3G51300"/>
<dbReference type="Araport" id="AT3G51300"/>
<dbReference type="TAIR" id="AT3G51300">
    <property type="gene designation" value="ROP1"/>
</dbReference>
<dbReference type="eggNOG" id="KOG0393">
    <property type="taxonomic scope" value="Eukaryota"/>
</dbReference>
<dbReference type="HOGENOM" id="CLU_041217_21_3_1"/>
<dbReference type="InParanoid" id="P92978"/>
<dbReference type="OMA" id="KCVIINV"/>
<dbReference type="PhylomeDB" id="P92978"/>
<dbReference type="PRO" id="PR:P92978"/>
<dbReference type="Proteomes" id="UP000006548">
    <property type="component" value="Chromosome 3"/>
</dbReference>
<dbReference type="ExpressionAtlas" id="P92978">
    <property type="expression patterns" value="baseline and differential"/>
</dbReference>
<dbReference type="GO" id="GO:0045177">
    <property type="term" value="C:apical part of cell"/>
    <property type="evidence" value="ECO:0000314"/>
    <property type="project" value="TAIR"/>
</dbReference>
<dbReference type="GO" id="GO:0005737">
    <property type="term" value="C:cytoplasm"/>
    <property type="evidence" value="ECO:0007005"/>
    <property type="project" value="TAIR"/>
</dbReference>
<dbReference type="GO" id="GO:0005730">
    <property type="term" value="C:nucleolus"/>
    <property type="evidence" value="ECO:0007005"/>
    <property type="project" value="TAIR"/>
</dbReference>
<dbReference type="GO" id="GO:0005634">
    <property type="term" value="C:nucleus"/>
    <property type="evidence" value="ECO:0007005"/>
    <property type="project" value="TAIR"/>
</dbReference>
<dbReference type="GO" id="GO:0009524">
    <property type="term" value="C:phragmoplast"/>
    <property type="evidence" value="ECO:0007005"/>
    <property type="project" value="TAIR"/>
</dbReference>
<dbReference type="GO" id="GO:0005886">
    <property type="term" value="C:plasma membrane"/>
    <property type="evidence" value="ECO:0000304"/>
    <property type="project" value="TAIR"/>
</dbReference>
<dbReference type="GO" id="GO:0005819">
    <property type="term" value="C:spindle"/>
    <property type="evidence" value="ECO:0007005"/>
    <property type="project" value="TAIR"/>
</dbReference>
<dbReference type="GO" id="GO:0005525">
    <property type="term" value="F:GTP binding"/>
    <property type="evidence" value="ECO:0000250"/>
    <property type="project" value="TAIR"/>
</dbReference>
<dbReference type="GO" id="GO:0032794">
    <property type="term" value="F:GTPase activating protein binding"/>
    <property type="evidence" value="ECO:0000353"/>
    <property type="project" value="TAIR"/>
</dbReference>
<dbReference type="GO" id="GO:0003924">
    <property type="term" value="F:GTPase activity"/>
    <property type="evidence" value="ECO:0000250"/>
    <property type="project" value="TAIR"/>
</dbReference>
<dbReference type="GO" id="GO:0051650">
    <property type="term" value="P:establishment of vesicle localization"/>
    <property type="evidence" value="ECO:0000314"/>
    <property type="project" value="TAIR"/>
</dbReference>
<dbReference type="GO" id="GO:0009860">
    <property type="term" value="P:pollen tube growth"/>
    <property type="evidence" value="ECO:0000315"/>
    <property type="project" value="TAIR"/>
</dbReference>
<dbReference type="GO" id="GO:0030834">
    <property type="term" value="P:regulation of actin filament depolymerization"/>
    <property type="evidence" value="ECO:0000316"/>
    <property type="project" value="TAIR"/>
</dbReference>
<dbReference type="GO" id="GO:0030833">
    <property type="term" value="P:regulation of actin filament polymerization"/>
    <property type="evidence" value="ECO:0000316"/>
    <property type="project" value="TAIR"/>
</dbReference>
<dbReference type="GO" id="GO:0017157">
    <property type="term" value="P:regulation of exocytosis"/>
    <property type="evidence" value="ECO:0000314"/>
    <property type="project" value="TAIR"/>
</dbReference>
<dbReference type="GO" id="GO:0007264">
    <property type="term" value="P:small GTPase-mediated signal transduction"/>
    <property type="evidence" value="ECO:0007669"/>
    <property type="project" value="InterPro"/>
</dbReference>
<dbReference type="CDD" id="cd04133">
    <property type="entry name" value="Rop_like"/>
    <property type="match status" value="1"/>
</dbReference>
<dbReference type="FunFam" id="3.40.50.300:FF:000336">
    <property type="entry name" value="rac-like GTP-binding protein RHO1"/>
    <property type="match status" value="1"/>
</dbReference>
<dbReference type="Gene3D" id="3.40.50.300">
    <property type="entry name" value="P-loop containing nucleotide triphosphate hydrolases"/>
    <property type="match status" value="1"/>
</dbReference>
<dbReference type="InterPro" id="IPR027417">
    <property type="entry name" value="P-loop_NTPase"/>
</dbReference>
<dbReference type="InterPro" id="IPR005225">
    <property type="entry name" value="Small_GTP-bd"/>
</dbReference>
<dbReference type="InterPro" id="IPR001806">
    <property type="entry name" value="Small_GTPase"/>
</dbReference>
<dbReference type="InterPro" id="IPR003578">
    <property type="entry name" value="Small_GTPase_Rho"/>
</dbReference>
<dbReference type="NCBIfam" id="TIGR00231">
    <property type="entry name" value="small_GTP"/>
    <property type="match status" value="1"/>
</dbReference>
<dbReference type="PANTHER" id="PTHR24072">
    <property type="entry name" value="RHO FAMILY GTPASE"/>
    <property type="match status" value="1"/>
</dbReference>
<dbReference type="Pfam" id="PF00071">
    <property type="entry name" value="Ras"/>
    <property type="match status" value="1"/>
</dbReference>
<dbReference type="PRINTS" id="PR00449">
    <property type="entry name" value="RASTRNSFRMNG"/>
</dbReference>
<dbReference type="SMART" id="SM00175">
    <property type="entry name" value="RAB"/>
    <property type="match status" value="1"/>
</dbReference>
<dbReference type="SMART" id="SM00173">
    <property type="entry name" value="RAS"/>
    <property type="match status" value="1"/>
</dbReference>
<dbReference type="SMART" id="SM00174">
    <property type="entry name" value="RHO"/>
    <property type="match status" value="1"/>
</dbReference>
<dbReference type="SUPFAM" id="SSF52540">
    <property type="entry name" value="P-loop containing nucleoside triphosphate hydrolases"/>
    <property type="match status" value="1"/>
</dbReference>
<dbReference type="PROSITE" id="PS51420">
    <property type="entry name" value="RHO"/>
    <property type="match status" value="1"/>
</dbReference>
<name>RAC11_ARATH</name>
<organism>
    <name type="scientific">Arabidopsis thaliana</name>
    <name type="common">Mouse-ear cress</name>
    <dbReference type="NCBI Taxonomy" id="3702"/>
    <lineage>
        <taxon>Eukaryota</taxon>
        <taxon>Viridiplantae</taxon>
        <taxon>Streptophyta</taxon>
        <taxon>Embryophyta</taxon>
        <taxon>Tracheophyta</taxon>
        <taxon>Spermatophyta</taxon>
        <taxon>Magnoliopsida</taxon>
        <taxon>eudicotyledons</taxon>
        <taxon>Gunneridae</taxon>
        <taxon>Pentapetalae</taxon>
        <taxon>rosids</taxon>
        <taxon>malvids</taxon>
        <taxon>Brassicales</taxon>
        <taxon>Brassicaceae</taxon>
        <taxon>Camelineae</taxon>
        <taxon>Arabidopsis</taxon>
    </lineage>
</organism>
<feature type="chain" id="PRO_0000198925" description="Rac-like GTP-binding protein ARAC11">
    <location>
        <begin position="1"/>
        <end position="194"/>
    </location>
</feature>
<feature type="propeptide" id="PRO_0000227587" description="Removed in mature form" evidence="2">
    <location>
        <begin position="195"/>
        <end position="197"/>
    </location>
</feature>
<feature type="short sequence motif" description="Effector region" evidence="2">
    <location>
        <begin position="35"/>
        <end position="43"/>
    </location>
</feature>
<feature type="binding site" evidence="1">
    <location>
        <begin position="13"/>
        <end position="20"/>
    </location>
    <ligand>
        <name>GTP</name>
        <dbReference type="ChEBI" id="CHEBI:37565"/>
    </ligand>
</feature>
<feature type="binding site" evidence="1">
    <location>
        <begin position="60"/>
        <end position="64"/>
    </location>
    <ligand>
        <name>GTP</name>
        <dbReference type="ChEBI" id="CHEBI:37565"/>
    </ligand>
</feature>
<feature type="binding site" evidence="1">
    <location>
        <begin position="118"/>
        <end position="121"/>
    </location>
    <ligand>
        <name>GTP</name>
        <dbReference type="ChEBI" id="CHEBI:37565"/>
    </ligand>
</feature>
<feature type="modified residue" description="Cysteine methyl ester" evidence="2">
    <location>
        <position position="194"/>
    </location>
</feature>
<feature type="lipid moiety-binding region" description="S-geranylgeranyl cysteine" evidence="2">
    <location>
        <position position="194"/>
    </location>
</feature>
<proteinExistence type="evidence at protein level"/>
<gene>
    <name evidence="9" type="primary">ARAC11</name>
    <name evidence="9" type="synonym">RAC11</name>
    <name evidence="10" type="synonym">ROP1</name>
    <name evidence="12" type="ordered locus">At3g51300</name>
    <name evidence="13" type="ORF">F24M12.340</name>
</gene>